<name>ADR1_ARATH</name>
<accession>Q9FW44</accession>
<keyword id="KW-0002">3D-structure</keyword>
<keyword id="KW-0067">ATP-binding</keyword>
<keyword id="KW-0175">Coiled coil</keyword>
<keyword id="KW-0381">Hypersensitive response</keyword>
<keyword id="KW-0433">Leucine-rich repeat</keyword>
<keyword id="KW-0547">Nucleotide-binding</keyword>
<keyword id="KW-0611">Plant defense</keyword>
<keyword id="KW-1185">Reference proteome</keyword>
<keyword id="KW-0677">Repeat</keyword>
<feature type="chain" id="PRO_0000212732" description="Disease resistance protein ADR1">
    <location>
        <begin position="1"/>
        <end position="787"/>
    </location>
</feature>
<feature type="domain" description="RPW8" evidence="3">
    <location>
        <begin position="1"/>
        <end position="149"/>
    </location>
</feature>
<feature type="domain" description="NB-ARC">
    <location>
        <begin position="247"/>
        <end position="414"/>
    </location>
</feature>
<feature type="repeat" description="LRR 1">
    <location>
        <begin position="549"/>
        <end position="575"/>
    </location>
</feature>
<feature type="repeat" description="LRR 2">
    <location>
        <begin position="576"/>
        <end position="599"/>
    </location>
</feature>
<feature type="repeat" description="LRR 3">
    <location>
        <begin position="650"/>
        <end position="674"/>
    </location>
</feature>
<feature type="repeat" description="LRR 4">
    <location>
        <begin position="722"/>
        <end position="745"/>
    </location>
</feature>
<feature type="coiled-coil region" evidence="2">
    <location>
        <begin position="96"/>
        <end position="112"/>
    </location>
</feature>
<feature type="binding site" evidence="2">
    <location>
        <begin position="193"/>
        <end position="200"/>
    </location>
    <ligand>
        <name>ATP</name>
        <dbReference type="ChEBI" id="CHEBI:30616"/>
    </ligand>
</feature>
<feature type="helix" evidence="6">
    <location>
        <begin position="375"/>
        <end position="383"/>
    </location>
</feature>
<feature type="helix" evidence="6">
    <location>
        <begin position="386"/>
        <end position="395"/>
    </location>
</feature>
<feature type="strand" evidence="6">
    <location>
        <begin position="400"/>
        <end position="402"/>
    </location>
</feature>
<feature type="helix" evidence="6">
    <location>
        <begin position="406"/>
        <end position="417"/>
    </location>
</feature>
<feature type="helix" evidence="6">
    <location>
        <begin position="421"/>
        <end position="433"/>
    </location>
</feature>
<feature type="helix" evidence="6">
    <location>
        <begin position="443"/>
        <end position="446"/>
    </location>
</feature>
<feature type="helix" evidence="6">
    <location>
        <begin position="461"/>
        <end position="470"/>
    </location>
</feature>
<feature type="helix" evidence="6">
    <location>
        <begin position="472"/>
        <end position="475"/>
    </location>
</feature>
<feature type="strand" evidence="6">
    <location>
        <begin position="479"/>
        <end position="481"/>
    </location>
</feature>
<feature type="helix" evidence="6">
    <location>
        <begin position="485"/>
        <end position="487"/>
    </location>
</feature>
<feature type="turn" evidence="6">
    <location>
        <begin position="493"/>
        <end position="495"/>
    </location>
</feature>
<feature type="helix" evidence="6">
    <location>
        <begin position="496"/>
        <end position="498"/>
    </location>
</feature>
<feature type="strand" evidence="6">
    <location>
        <begin position="509"/>
        <end position="511"/>
    </location>
</feature>
<feature type="strand" evidence="6">
    <location>
        <begin position="513"/>
        <end position="515"/>
    </location>
</feature>
<feature type="strand" evidence="6">
    <location>
        <begin position="532"/>
        <end position="535"/>
    </location>
</feature>
<feature type="strand" evidence="6">
    <location>
        <begin position="537"/>
        <end position="541"/>
    </location>
</feature>
<feature type="helix" evidence="6">
    <location>
        <begin position="545"/>
        <end position="548"/>
    </location>
</feature>
<feature type="strand" evidence="6">
    <location>
        <begin position="554"/>
        <end position="559"/>
    </location>
</feature>
<feature type="strand" evidence="6">
    <location>
        <begin position="561"/>
        <end position="563"/>
    </location>
</feature>
<feature type="helix" evidence="6">
    <location>
        <begin position="571"/>
        <end position="574"/>
    </location>
</feature>
<feature type="strand" evidence="6">
    <location>
        <begin position="581"/>
        <end position="587"/>
    </location>
</feature>
<feature type="strand" evidence="6">
    <location>
        <begin position="604"/>
        <end position="609"/>
    </location>
</feature>
<feature type="turn" evidence="6">
    <location>
        <begin position="613"/>
        <end position="615"/>
    </location>
</feature>
<feature type="helix" evidence="6">
    <location>
        <begin position="623"/>
        <end position="626"/>
    </location>
</feature>
<feature type="strand" evidence="6">
    <location>
        <begin position="631"/>
        <end position="637"/>
    </location>
</feature>
<feature type="helix" evidence="6">
    <location>
        <begin position="645"/>
        <end position="649"/>
    </location>
</feature>
<feature type="strand" evidence="6">
    <location>
        <begin position="655"/>
        <end position="660"/>
    </location>
</feature>
<feature type="strand" evidence="6">
    <location>
        <begin position="679"/>
        <end position="682"/>
    </location>
</feature>
<feature type="helix" evidence="6">
    <location>
        <begin position="693"/>
        <end position="697"/>
    </location>
</feature>
<feature type="strand" evidence="6">
    <location>
        <begin position="703"/>
        <end position="706"/>
    </location>
</feature>
<feature type="strand" evidence="6">
    <location>
        <begin position="727"/>
        <end position="729"/>
    </location>
</feature>
<feature type="helix" evidence="6">
    <location>
        <begin position="740"/>
        <end position="744"/>
    </location>
</feature>
<feature type="strand" evidence="6">
    <location>
        <begin position="749"/>
        <end position="752"/>
    </location>
</feature>
<feature type="strand" evidence="6">
    <location>
        <begin position="754"/>
        <end position="757"/>
    </location>
</feature>
<feature type="helix" evidence="6">
    <location>
        <begin position="758"/>
        <end position="767"/>
    </location>
</feature>
<feature type="helix" evidence="6">
    <location>
        <begin position="783"/>
        <end position="785"/>
    </location>
</feature>
<reference key="1">
    <citation type="journal article" date="2003" name="Mol. Plant Microbe Interact.">
        <title>Targeted activation tagging of the Arabidopsis NBS-LRR gene, ADR1, conveys resistance to virulent pathogens.</title>
        <authorList>
            <person name="Grant J.J."/>
            <person name="Chini A."/>
            <person name="Basu D."/>
            <person name="Loake G.J."/>
        </authorList>
    </citation>
    <scope>NUCLEOTIDE SEQUENCE [MRNA]</scope>
    <scope>FUNCTION</scope>
    <scope>INDUCTION</scope>
</reference>
<reference key="2">
    <citation type="journal article" date="2000" name="Nature">
        <title>Sequence and analysis of chromosome 1 of the plant Arabidopsis thaliana.</title>
        <authorList>
            <person name="Theologis A."/>
            <person name="Ecker J.R."/>
            <person name="Palm C.J."/>
            <person name="Federspiel N.A."/>
            <person name="Kaul S."/>
            <person name="White O."/>
            <person name="Alonso J."/>
            <person name="Altafi H."/>
            <person name="Araujo R."/>
            <person name="Bowman C.L."/>
            <person name="Brooks S.Y."/>
            <person name="Buehler E."/>
            <person name="Chan A."/>
            <person name="Chao Q."/>
            <person name="Chen H."/>
            <person name="Cheuk R.F."/>
            <person name="Chin C.W."/>
            <person name="Chung M.K."/>
            <person name="Conn L."/>
            <person name="Conway A.B."/>
            <person name="Conway A.R."/>
            <person name="Creasy T.H."/>
            <person name="Dewar K."/>
            <person name="Dunn P."/>
            <person name="Etgu P."/>
            <person name="Feldblyum T.V."/>
            <person name="Feng J.-D."/>
            <person name="Fong B."/>
            <person name="Fujii C.Y."/>
            <person name="Gill J.E."/>
            <person name="Goldsmith A.D."/>
            <person name="Haas B."/>
            <person name="Hansen N.F."/>
            <person name="Hughes B."/>
            <person name="Huizar L."/>
            <person name="Hunter J.L."/>
            <person name="Jenkins J."/>
            <person name="Johnson-Hopson C."/>
            <person name="Khan S."/>
            <person name="Khaykin E."/>
            <person name="Kim C.J."/>
            <person name="Koo H.L."/>
            <person name="Kremenetskaia I."/>
            <person name="Kurtz D.B."/>
            <person name="Kwan A."/>
            <person name="Lam B."/>
            <person name="Langin-Hooper S."/>
            <person name="Lee A."/>
            <person name="Lee J.M."/>
            <person name="Lenz C.A."/>
            <person name="Li J.H."/>
            <person name="Li Y.-P."/>
            <person name="Lin X."/>
            <person name="Liu S.X."/>
            <person name="Liu Z.A."/>
            <person name="Luros J.S."/>
            <person name="Maiti R."/>
            <person name="Marziali A."/>
            <person name="Militscher J."/>
            <person name="Miranda M."/>
            <person name="Nguyen M."/>
            <person name="Nierman W.C."/>
            <person name="Osborne B.I."/>
            <person name="Pai G."/>
            <person name="Peterson J."/>
            <person name="Pham P.K."/>
            <person name="Rizzo M."/>
            <person name="Rooney T."/>
            <person name="Rowley D."/>
            <person name="Sakano H."/>
            <person name="Salzberg S.L."/>
            <person name="Schwartz J.R."/>
            <person name="Shinn P."/>
            <person name="Southwick A.M."/>
            <person name="Sun H."/>
            <person name="Tallon L.J."/>
            <person name="Tambunga G."/>
            <person name="Toriumi M.J."/>
            <person name="Town C.D."/>
            <person name="Utterback T."/>
            <person name="Van Aken S."/>
            <person name="Vaysberg M."/>
            <person name="Vysotskaia V.S."/>
            <person name="Walker M."/>
            <person name="Wu D."/>
            <person name="Yu G."/>
            <person name="Fraser C.M."/>
            <person name="Venter J.C."/>
            <person name="Davis R.W."/>
        </authorList>
    </citation>
    <scope>NUCLEOTIDE SEQUENCE [LARGE SCALE GENOMIC DNA]</scope>
    <source>
        <strain>cv. Columbia</strain>
    </source>
</reference>
<reference key="3">
    <citation type="journal article" date="2017" name="Plant J.">
        <title>Araport11: a complete reannotation of the Arabidopsis thaliana reference genome.</title>
        <authorList>
            <person name="Cheng C.Y."/>
            <person name="Krishnakumar V."/>
            <person name="Chan A.P."/>
            <person name="Thibaud-Nissen F."/>
            <person name="Schobel S."/>
            <person name="Town C.D."/>
        </authorList>
    </citation>
    <scope>GENOME REANNOTATION</scope>
    <source>
        <strain>cv. Columbia</strain>
    </source>
</reference>
<gene>
    <name type="primary">ADR1</name>
    <name type="ordered locus">At1g33560</name>
    <name type="ORF">F10C21.19</name>
    <name type="ORF">T1E4.6</name>
</gene>
<comment type="function">
    <text evidence="4">Disease resistance (R) protein that mediates resistance against Hyaloperonospora parasitica in a salicylic acid-dependent manner. Also mediates resistance against Erysiphe cichoracearum is both salicylic acid-dependent and partially NPR1-dependent. Resistance proteins guard the plant against pathogens that contain an appropriate avirulence protein via an indirect interaction with this avirulence protein. That triggers a defense system including the hypersensitive response, which restricts the pathogen growth.</text>
</comment>
<comment type="induction">
    <text evidence="4">Accumulates in leaves 1.5 hours postinfiltration of Pseudomonas syringae.</text>
</comment>
<comment type="domain">
    <text evidence="1">The LRR repeats probably act as specificity determinant of pathogen recognition.</text>
</comment>
<comment type="similarity">
    <text evidence="5">Belongs to the disease resistance NB-LRR family.</text>
</comment>
<comment type="sequence caution" evidence="5">
    <conflict type="erroneous gene model prediction">
        <sequence resource="EMBL-CDS" id="AAG26078"/>
    </conflict>
</comment>
<comment type="sequence caution" evidence="5">
    <conflict type="erroneous gene model prediction">
        <sequence resource="EMBL-CDS" id="AAG51211"/>
    </conflict>
</comment>
<comment type="online information" name="NIB-LRRS">
    <link uri="http://niblrrs.ucdavis.edu"/>
    <text>Functional and comparative genomics of disease resistance gene homologs</text>
</comment>
<dbReference type="EMBL" id="AJ581996">
    <property type="protein sequence ID" value="CAE46486.1"/>
    <property type="molecule type" value="mRNA"/>
</dbReference>
<dbReference type="EMBL" id="AC051630">
    <property type="protein sequence ID" value="AAG51211.1"/>
    <property type="status" value="ALT_SEQ"/>
    <property type="molecule type" value="Genomic_DNA"/>
</dbReference>
<dbReference type="EMBL" id="AC069299">
    <property type="protein sequence ID" value="AAG26078.1"/>
    <property type="status" value="ALT_SEQ"/>
    <property type="molecule type" value="Genomic_DNA"/>
</dbReference>
<dbReference type="EMBL" id="CP002684">
    <property type="protein sequence ID" value="AEE31605.1"/>
    <property type="molecule type" value="Genomic_DNA"/>
</dbReference>
<dbReference type="PIR" id="D86459">
    <property type="entry name" value="D86459"/>
</dbReference>
<dbReference type="RefSeq" id="NP_174620.2">
    <property type="nucleotide sequence ID" value="NM_103079.4"/>
</dbReference>
<dbReference type="PDB" id="8ZW9">
    <property type="method" value="EM"/>
    <property type="resolution" value="3.03 A"/>
    <property type="chains" value="A=1-787"/>
</dbReference>
<dbReference type="PDB" id="8ZWA">
    <property type="method" value="EM"/>
    <property type="resolution" value="3.48 A"/>
    <property type="chains" value="A=1-787"/>
</dbReference>
<dbReference type="PDBsum" id="8ZW9"/>
<dbReference type="PDBsum" id="8ZWA"/>
<dbReference type="EMDB" id="EMD-60520"/>
<dbReference type="EMDB" id="EMD-60521"/>
<dbReference type="SMR" id="Q9FW44"/>
<dbReference type="FunCoup" id="Q9FW44">
    <property type="interactions" value="10"/>
</dbReference>
<dbReference type="STRING" id="3702.Q9FW44"/>
<dbReference type="iPTMnet" id="Q9FW44"/>
<dbReference type="PaxDb" id="3702-AT1G33560.1"/>
<dbReference type="ProteomicsDB" id="244905"/>
<dbReference type="EnsemblPlants" id="AT1G33560.1">
    <property type="protein sequence ID" value="AT1G33560.1"/>
    <property type="gene ID" value="AT1G33560"/>
</dbReference>
<dbReference type="GeneID" id="840250"/>
<dbReference type="Gramene" id="AT1G33560.1">
    <property type="protein sequence ID" value="AT1G33560.1"/>
    <property type="gene ID" value="AT1G33560"/>
</dbReference>
<dbReference type="KEGG" id="ath:AT1G33560"/>
<dbReference type="Araport" id="AT1G33560"/>
<dbReference type="TAIR" id="AT1G33560">
    <property type="gene designation" value="ADR1"/>
</dbReference>
<dbReference type="eggNOG" id="ENOG502QU6E">
    <property type="taxonomic scope" value="Eukaryota"/>
</dbReference>
<dbReference type="HOGENOM" id="CLU_012216_1_0_1"/>
<dbReference type="InParanoid" id="Q9FW44"/>
<dbReference type="OMA" id="WVERHDI"/>
<dbReference type="PhylomeDB" id="Q9FW44"/>
<dbReference type="PRO" id="PR:Q9FW44"/>
<dbReference type="Proteomes" id="UP000006548">
    <property type="component" value="Chromosome 1"/>
</dbReference>
<dbReference type="ExpressionAtlas" id="Q9FW44">
    <property type="expression patterns" value="baseline and differential"/>
</dbReference>
<dbReference type="GO" id="GO:0043531">
    <property type="term" value="F:ADP binding"/>
    <property type="evidence" value="ECO:0007669"/>
    <property type="project" value="InterPro"/>
</dbReference>
<dbReference type="GO" id="GO:0005524">
    <property type="term" value="F:ATP binding"/>
    <property type="evidence" value="ECO:0007669"/>
    <property type="project" value="UniProtKB-KW"/>
</dbReference>
<dbReference type="GO" id="GO:0016301">
    <property type="term" value="F:kinase activity"/>
    <property type="evidence" value="ECO:0000304"/>
    <property type="project" value="TAIR"/>
</dbReference>
<dbReference type="GO" id="GO:0042742">
    <property type="term" value="P:defense response to bacterium"/>
    <property type="evidence" value="ECO:0000316"/>
    <property type="project" value="TAIR"/>
</dbReference>
<dbReference type="GO" id="GO:0009626">
    <property type="term" value="P:plant-type hypersensitive response"/>
    <property type="evidence" value="ECO:0007669"/>
    <property type="project" value="UniProtKB-KW"/>
</dbReference>
<dbReference type="GO" id="GO:0051707">
    <property type="term" value="P:response to other organism"/>
    <property type="evidence" value="ECO:0000270"/>
    <property type="project" value="TAIR"/>
</dbReference>
<dbReference type="GO" id="GO:0009414">
    <property type="term" value="P:response to water deprivation"/>
    <property type="evidence" value="ECO:0000315"/>
    <property type="project" value="TAIR"/>
</dbReference>
<dbReference type="CDD" id="cd21037">
    <property type="entry name" value="MLKL_NTD"/>
    <property type="match status" value="1"/>
</dbReference>
<dbReference type="FunFam" id="1.10.10.10:FF:001043">
    <property type="entry name" value="Probable disease resistance protein At4g33300"/>
    <property type="match status" value="1"/>
</dbReference>
<dbReference type="FunFam" id="3.80.10.10:FF:001050">
    <property type="entry name" value="Probable disease resistance protein At5g66900"/>
    <property type="match status" value="1"/>
</dbReference>
<dbReference type="FunFam" id="1.10.8.430:FF:000003">
    <property type="entry name" value="Probable disease resistance protein At5g66910"/>
    <property type="match status" value="1"/>
</dbReference>
<dbReference type="Gene3D" id="1.10.8.430">
    <property type="entry name" value="Helical domain of apoptotic protease-activating factors"/>
    <property type="match status" value="1"/>
</dbReference>
<dbReference type="Gene3D" id="3.40.50.300">
    <property type="entry name" value="P-loop containing nucleotide triphosphate hydrolases"/>
    <property type="match status" value="1"/>
</dbReference>
<dbReference type="Gene3D" id="3.80.10.10">
    <property type="entry name" value="Ribonuclease Inhibitor"/>
    <property type="match status" value="1"/>
</dbReference>
<dbReference type="Gene3D" id="1.10.10.10">
    <property type="entry name" value="Winged helix-like DNA-binding domain superfamily/Winged helix DNA-binding domain"/>
    <property type="match status" value="1"/>
</dbReference>
<dbReference type="InterPro" id="IPR042197">
    <property type="entry name" value="Apaf_helical"/>
</dbReference>
<dbReference type="InterPro" id="IPR032675">
    <property type="entry name" value="LRR_dom_sf"/>
</dbReference>
<dbReference type="InterPro" id="IPR002182">
    <property type="entry name" value="NB-ARC"/>
</dbReference>
<dbReference type="InterPro" id="IPR027417">
    <property type="entry name" value="P-loop_NTPase"/>
</dbReference>
<dbReference type="InterPro" id="IPR008808">
    <property type="entry name" value="Powdery_mildew-R_dom"/>
</dbReference>
<dbReference type="InterPro" id="IPR036388">
    <property type="entry name" value="WH-like_DNA-bd_sf"/>
</dbReference>
<dbReference type="PANTHER" id="PTHR36766:SF25">
    <property type="entry name" value="DISEASE RESISTANCE PROTEIN ADR1"/>
    <property type="match status" value="1"/>
</dbReference>
<dbReference type="PANTHER" id="PTHR36766">
    <property type="entry name" value="PLANT BROAD-SPECTRUM MILDEW RESISTANCE PROTEIN RPW8"/>
    <property type="match status" value="1"/>
</dbReference>
<dbReference type="Pfam" id="PF00931">
    <property type="entry name" value="NB-ARC"/>
    <property type="match status" value="1"/>
</dbReference>
<dbReference type="Pfam" id="PF05659">
    <property type="entry name" value="RPW8"/>
    <property type="match status" value="1"/>
</dbReference>
<dbReference type="PRINTS" id="PR00364">
    <property type="entry name" value="DISEASERSIST"/>
</dbReference>
<dbReference type="SUPFAM" id="SSF52058">
    <property type="entry name" value="L domain-like"/>
    <property type="match status" value="1"/>
</dbReference>
<dbReference type="SUPFAM" id="SSF52540">
    <property type="entry name" value="P-loop containing nucleoside triphosphate hydrolases"/>
    <property type="match status" value="1"/>
</dbReference>
<dbReference type="PROSITE" id="PS51153">
    <property type="entry name" value="RPW8"/>
    <property type="match status" value="1"/>
</dbReference>
<proteinExistence type="evidence at protein level"/>
<organism>
    <name type="scientific">Arabidopsis thaliana</name>
    <name type="common">Mouse-ear cress</name>
    <dbReference type="NCBI Taxonomy" id="3702"/>
    <lineage>
        <taxon>Eukaryota</taxon>
        <taxon>Viridiplantae</taxon>
        <taxon>Streptophyta</taxon>
        <taxon>Embryophyta</taxon>
        <taxon>Tracheophyta</taxon>
        <taxon>Spermatophyta</taxon>
        <taxon>Magnoliopsida</taxon>
        <taxon>eudicotyledons</taxon>
        <taxon>Gunneridae</taxon>
        <taxon>Pentapetalae</taxon>
        <taxon>rosids</taxon>
        <taxon>malvids</taxon>
        <taxon>Brassicales</taxon>
        <taxon>Brassicaceae</taxon>
        <taxon>Camelineae</taxon>
        <taxon>Arabidopsis</taxon>
    </lineage>
</organism>
<sequence>MASFIDLFAGDITTQLLKLLALVANTVYSCKGIAERLITMIRDVQPTIREIQYSGAELSNHHQTQLGVFYEILEKARKLCEKVLRCNRWNLKHVYHANKMKDLEKQISRFLNSQILLFVLAEVCHLRVNGDRIERNMDRLLTERNDSLSFPETMMEIETVSDPEIQTVLELGKKKVKEMMFKFTDTHLFGISGMSGSGKTTLAIELSKDDDVRGLFKNKVLFLTVSRSPNFENLESCIREFLYDGVHQRKLVILDDVWTRESLDRLMSKIRGSTTLVVSRSKLADPRTTYNVELLKKDEAMSLLCLCAFEQKSPPSPFNKYLVKQVVDECKGLPLSLKVLGASLKNKPERYWEGVVKRLLRGEAADETHESRVFAHMEESLENLDPKIRDCFLDMGAFPEDKKIPLDLLTSVWVERHDIDEETAFSFVLRLADKNLLTIVNNPRFGDVHIGYYDVFVTQHDVLRDLALHMSNRVDVNRRERLLMPKTEPVLPREWEKNKDEPFDAKIVSLHTGEMDEMNWFDMDLPKAEVLILNFSSDNYVLPPFIGKMSRLRVLVIINNGMSPARLHGFSIFANLAKLRSLWLKRVHVPELTSCTIPLKNLHKIHLIFCKVKNSFVQTSFDISKIFPSLSDLTIDHCDDLLELKSIFGITSLNSLSITNCPRILELPKNLSNVQSLERLRLYACPELISLPVEVCELPCLKYVDISQCVSLVSLPEKFGKLGSLEKIDMRECSLLGLPSSVAALVSLRHVICDEETSSMWEMVKKVVPELCIEVAKKCFTVDWLDD</sequence>
<protein>
    <recommendedName>
        <fullName>Disease resistance protein ADR1</fullName>
    </recommendedName>
    <alternativeName>
        <fullName>Activated disease resistance protein 1</fullName>
    </alternativeName>
</protein>
<evidence type="ECO:0000250" key="1"/>
<evidence type="ECO:0000255" key="2"/>
<evidence type="ECO:0000255" key="3">
    <source>
        <dbReference type="PROSITE-ProRule" id="PRU00495"/>
    </source>
</evidence>
<evidence type="ECO:0000269" key="4">
    <source>
    </source>
</evidence>
<evidence type="ECO:0000305" key="5"/>
<evidence type="ECO:0007829" key="6">
    <source>
        <dbReference type="PDB" id="8ZWA"/>
    </source>
</evidence>